<comment type="function">
    <text evidence="1">Pyrophosphatase that catalyzes the hydrolysis of nucleoside triphosphates to their monophosphate derivatives, with a high preference for the non-canonical purine nucleotides XTP (xanthosine triphosphate), dITP (deoxyinosine triphosphate) and ITP. Seems to function as a house-cleaning enzyme that removes non-canonical purine nucleotides from the nucleotide pool, thus preventing their incorporation into DNA/RNA and avoiding chromosomal lesions.</text>
</comment>
<comment type="catalytic activity">
    <reaction evidence="1">
        <text>XTP + H2O = XMP + diphosphate + H(+)</text>
        <dbReference type="Rhea" id="RHEA:28610"/>
        <dbReference type="ChEBI" id="CHEBI:15377"/>
        <dbReference type="ChEBI" id="CHEBI:15378"/>
        <dbReference type="ChEBI" id="CHEBI:33019"/>
        <dbReference type="ChEBI" id="CHEBI:57464"/>
        <dbReference type="ChEBI" id="CHEBI:61314"/>
        <dbReference type="EC" id="3.6.1.66"/>
    </reaction>
</comment>
<comment type="catalytic activity">
    <reaction evidence="1">
        <text>dITP + H2O = dIMP + diphosphate + H(+)</text>
        <dbReference type="Rhea" id="RHEA:28342"/>
        <dbReference type="ChEBI" id="CHEBI:15377"/>
        <dbReference type="ChEBI" id="CHEBI:15378"/>
        <dbReference type="ChEBI" id="CHEBI:33019"/>
        <dbReference type="ChEBI" id="CHEBI:61194"/>
        <dbReference type="ChEBI" id="CHEBI:61382"/>
        <dbReference type="EC" id="3.6.1.66"/>
    </reaction>
</comment>
<comment type="catalytic activity">
    <reaction evidence="1">
        <text>ITP + H2O = IMP + diphosphate + H(+)</text>
        <dbReference type="Rhea" id="RHEA:29399"/>
        <dbReference type="ChEBI" id="CHEBI:15377"/>
        <dbReference type="ChEBI" id="CHEBI:15378"/>
        <dbReference type="ChEBI" id="CHEBI:33019"/>
        <dbReference type="ChEBI" id="CHEBI:58053"/>
        <dbReference type="ChEBI" id="CHEBI:61402"/>
        <dbReference type="EC" id="3.6.1.66"/>
    </reaction>
</comment>
<comment type="cofactor">
    <cofactor evidence="1">
        <name>Mg(2+)</name>
        <dbReference type="ChEBI" id="CHEBI:18420"/>
    </cofactor>
    <text evidence="1">Binds 1 Mg(2+) ion per subunit.</text>
</comment>
<comment type="subunit">
    <text evidence="1">Homodimer.</text>
</comment>
<comment type="similarity">
    <text evidence="1">Belongs to the HAM1 NTPase family.</text>
</comment>
<organism>
    <name type="scientific">Thermus thermophilus (strain ATCC 27634 / DSM 579 / HB8)</name>
    <dbReference type="NCBI Taxonomy" id="300852"/>
    <lineage>
        <taxon>Bacteria</taxon>
        <taxon>Thermotogati</taxon>
        <taxon>Deinococcota</taxon>
        <taxon>Deinococci</taxon>
        <taxon>Thermales</taxon>
        <taxon>Thermaceae</taxon>
        <taxon>Thermus</taxon>
    </lineage>
</organism>
<proteinExistence type="inferred from homology"/>
<gene>
    <name type="ordered locus">TTHA1654</name>
</gene>
<evidence type="ECO:0000255" key="1">
    <source>
        <dbReference type="HAMAP-Rule" id="MF_01405"/>
    </source>
</evidence>
<sequence length="207" mass="22556">MLRGMKVVLATGNPGKVRELKEGLAPLGWTLLTLADFALRMPKEEGATFLENALLKAAYVAKATGLPALADDSGLEVYALGGEPGVYSARYGGRATDRERNVYLLERMRHLKGEERKARFVAVLVLAYPDGHAEAYEGSVEGVILEAPRGEGGFGYDPLFYVPEAGKTFAEMGLEEKARYSHRGKALRALLEAYKDGPPPREVSKLE</sequence>
<dbReference type="EC" id="3.6.1.66" evidence="1"/>
<dbReference type="EMBL" id="AP008226">
    <property type="protein sequence ID" value="BAD71477.1"/>
    <property type="molecule type" value="Genomic_DNA"/>
</dbReference>
<dbReference type="RefSeq" id="YP_144920.1">
    <property type="nucleotide sequence ID" value="NC_006461.1"/>
</dbReference>
<dbReference type="SMR" id="Q5SHS6"/>
<dbReference type="EnsemblBacteria" id="BAD71477">
    <property type="protein sequence ID" value="BAD71477"/>
    <property type="gene ID" value="BAD71477"/>
</dbReference>
<dbReference type="KEGG" id="ttj:TTHA1654"/>
<dbReference type="PATRIC" id="fig|300852.9.peg.1624"/>
<dbReference type="eggNOG" id="COG0127">
    <property type="taxonomic scope" value="Bacteria"/>
</dbReference>
<dbReference type="HOGENOM" id="CLU_082080_0_2_0"/>
<dbReference type="PhylomeDB" id="Q5SHS6"/>
<dbReference type="Proteomes" id="UP000000532">
    <property type="component" value="Chromosome"/>
</dbReference>
<dbReference type="GO" id="GO:0005829">
    <property type="term" value="C:cytosol"/>
    <property type="evidence" value="ECO:0007669"/>
    <property type="project" value="TreeGrafter"/>
</dbReference>
<dbReference type="GO" id="GO:0035870">
    <property type="term" value="F:dITP diphosphatase activity"/>
    <property type="evidence" value="ECO:0007669"/>
    <property type="project" value="RHEA"/>
</dbReference>
<dbReference type="GO" id="GO:0036220">
    <property type="term" value="F:ITP diphosphatase activity"/>
    <property type="evidence" value="ECO:0007669"/>
    <property type="project" value="UniProtKB-EC"/>
</dbReference>
<dbReference type="GO" id="GO:0046872">
    <property type="term" value="F:metal ion binding"/>
    <property type="evidence" value="ECO:0007669"/>
    <property type="project" value="UniProtKB-KW"/>
</dbReference>
<dbReference type="GO" id="GO:0000166">
    <property type="term" value="F:nucleotide binding"/>
    <property type="evidence" value="ECO:0007669"/>
    <property type="project" value="UniProtKB-KW"/>
</dbReference>
<dbReference type="GO" id="GO:0017111">
    <property type="term" value="F:ribonucleoside triphosphate phosphatase activity"/>
    <property type="evidence" value="ECO:0007669"/>
    <property type="project" value="InterPro"/>
</dbReference>
<dbReference type="GO" id="GO:0036222">
    <property type="term" value="F:XTP diphosphatase activity"/>
    <property type="evidence" value="ECO:0007669"/>
    <property type="project" value="RHEA"/>
</dbReference>
<dbReference type="GO" id="GO:0009117">
    <property type="term" value="P:nucleotide metabolic process"/>
    <property type="evidence" value="ECO:0007669"/>
    <property type="project" value="UniProtKB-KW"/>
</dbReference>
<dbReference type="GO" id="GO:0009146">
    <property type="term" value="P:purine nucleoside triphosphate catabolic process"/>
    <property type="evidence" value="ECO:0007669"/>
    <property type="project" value="UniProtKB-UniRule"/>
</dbReference>
<dbReference type="CDD" id="cd00515">
    <property type="entry name" value="HAM1"/>
    <property type="match status" value="1"/>
</dbReference>
<dbReference type="FunFam" id="3.90.950.10:FF:000001">
    <property type="entry name" value="dITP/XTP pyrophosphatase"/>
    <property type="match status" value="1"/>
</dbReference>
<dbReference type="Gene3D" id="3.90.950.10">
    <property type="match status" value="1"/>
</dbReference>
<dbReference type="HAMAP" id="MF_01405">
    <property type="entry name" value="Non_canon_purine_NTPase"/>
    <property type="match status" value="1"/>
</dbReference>
<dbReference type="InterPro" id="IPR020922">
    <property type="entry name" value="dITP/XTP_pyrophosphatase"/>
</dbReference>
<dbReference type="InterPro" id="IPR029001">
    <property type="entry name" value="ITPase-like_fam"/>
</dbReference>
<dbReference type="InterPro" id="IPR002637">
    <property type="entry name" value="RdgB/HAM1"/>
</dbReference>
<dbReference type="NCBIfam" id="TIGR00042">
    <property type="entry name" value="RdgB/HAM1 family non-canonical purine NTP pyrophosphatase"/>
    <property type="match status" value="1"/>
</dbReference>
<dbReference type="PANTHER" id="PTHR11067:SF9">
    <property type="entry name" value="INOSINE TRIPHOSPHATE PYROPHOSPHATASE"/>
    <property type="match status" value="1"/>
</dbReference>
<dbReference type="PANTHER" id="PTHR11067">
    <property type="entry name" value="INOSINE TRIPHOSPHATE PYROPHOSPHATASE/HAM1 PROTEIN"/>
    <property type="match status" value="1"/>
</dbReference>
<dbReference type="Pfam" id="PF01725">
    <property type="entry name" value="Ham1p_like"/>
    <property type="match status" value="1"/>
</dbReference>
<dbReference type="SUPFAM" id="SSF52972">
    <property type="entry name" value="ITPase-like"/>
    <property type="match status" value="1"/>
</dbReference>
<keyword id="KW-0378">Hydrolase</keyword>
<keyword id="KW-0460">Magnesium</keyword>
<keyword id="KW-0479">Metal-binding</keyword>
<keyword id="KW-0546">Nucleotide metabolism</keyword>
<keyword id="KW-0547">Nucleotide-binding</keyword>
<keyword id="KW-1185">Reference proteome</keyword>
<accession>Q5SHS6</accession>
<protein>
    <recommendedName>
        <fullName evidence="1">dITP/XTP pyrophosphatase</fullName>
        <ecNumber evidence="1">3.6.1.66</ecNumber>
    </recommendedName>
    <alternativeName>
        <fullName evidence="1">Non-canonical purine NTP pyrophosphatase</fullName>
    </alternativeName>
    <alternativeName>
        <fullName evidence="1">Non-standard purine NTP pyrophosphatase</fullName>
    </alternativeName>
    <alternativeName>
        <fullName evidence="1">Nucleoside-triphosphate diphosphatase</fullName>
    </alternativeName>
    <alternativeName>
        <fullName evidence="1">Nucleoside-triphosphate pyrophosphatase</fullName>
        <shortName evidence="1">NTPase</shortName>
    </alternativeName>
</protein>
<feature type="chain" id="PRO_0000178254" description="dITP/XTP pyrophosphatase">
    <location>
        <begin position="1"/>
        <end position="207"/>
    </location>
</feature>
<feature type="active site" description="Proton acceptor" evidence="1">
    <location>
        <position position="72"/>
    </location>
</feature>
<feature type="binding site" evidence="1">
    <location>
        <begin position="11"/>
        <end position="16"/>
    </location>
    <ligand>
        <name>substrate</name>
    </ligand>
</feature>
<feature type="binding site" evidence="1">
    <location>
        <position position="72"/>
    </location>
    <ligand>
        <name>Mg(2+)</name>
        <dbReference type="ChEBI" id="CHEBI:18420"/>
    </ligand>
</feature>
<feature type="binding site" evidence="1">
    <location>
        <position position="73"/>
    </location>
    <ligand>
        <name>substrate</name>
    </ligand>
</feature>
<feature type="binding site" evidence="1">
    <location>
        <begin position="154"/>
        <end position="157"/>
    </location>
    <ligand>
        <name>substrate</name>
    </ligand>
</feature>
<feature type="binding site" evidence="1">
    <location>
        <position position="177"/>
    </location>
    <ligand>
        <name>substrate</name>
    </ligand>
</feature>
<feature type="binding site" evidence="1">
    <location>
        <begin position="182"/>
        <end position="183"/>
    </location>
    <ligand>
        <name>substrate</name>
    </ligand>
</feature>
<reference key="1">
    <citation type="submission" date="2004-11" db="EMBL/GenBank/DDBJ databases">
        <title>Complete genome sequence of Thermus thermophilus HB8.</title>
        <authorList>
            <person name="Masui R."/>
            <person name="Kurokawa K."/>
            <person name="Nakagawa N."/>
            <person name="Tokunaga F."/>
            <person name="Koyama Y."/>
            <person name="Shibata T."/>
            <person name="Oshima T."/>
            <person name="Yokoyama S."/>
            <person name="Yasunaga T."/>
            <person name="Kuramitsu S."/>
        </authorList>
    </citation>
    <scope>NUCLEOTIDE SEQUENCE [LARGE SCALE GENOMIC DNA]</scope>
    <source>
        <strain>ATCC 27634 / DSM 579 / HB8</strain>
    </source>
</reference>
<name>IXTPA_THET8</name>